<proteinExistence type="inferred from homology"/>
<organism>
    <name type="scientific">Mycobacterium bovis (strain ATCC BAA-935 / AF2122/97)</name>
    <dbReference type="NCBI Taxonomy" id="233413"/>
    <lineage>
        <taxon>Bacteria</taxon>
        <taxon>Bacillati</taxon>
        <taxon>Actinomycetota</taxon>
        <taxon>Actinomycetes</taxon>
        <taxon>Mycobacteriales</taxon>
        <taxon>Mycobacteriaceae</taxon>
        <taxon>Mycobacterium</taxon>
        <taxon>Mycobacterium tuberculosis complex</taxon>
    </lineage>
</organism>
<keyword id="KW-0963">Cytoplasm</keyword>
<keyword id="KW-0342">GTP-binding</keyword>
<keyword id="KW-0460">Magnesium</keyword>
<keyword id="KW-0479">Metal-binding</keyword>
<keyword id="KW-0501">Molybdenum cofactor biosynthesis</keyword>
<keyword id="KW-0547">Nucleotide-binding</keyword>
<keyword id="KW-1185">Reference proteome</keyword>
<keyword id="KW-0808">Transferase</keyword>
<name>MOBA_MYCBO</name>
<comment type="function">
    <text evidence="1">Transfers a GMP moiety from GTP to Mo-molybdopterin (Mo-MPT) cofactor (Moco or molybdenum cofactor) to form Mo-molybdopterin guanine dinucleotide (Mo-MGD) cofactor.</text>
</comment>
<comment type="catalytic activity">
    <reaction evidence="1">
        <text>Mo-molybdopterin + GTP + H(+) = Mo-molybdopterin guanine dinucleotide + diphosphate</text>
        <dbReference type="Rhea" id="RHEA:34243"/>
        <dbReference type="ChEBI" id="CHEBI:15378"/>
        <dbReference type="ChEBI" id="CHEBI:33019"/>
        <dbReference type="ChEBI" id="CHEBI:37565"/>
        <dbReference type="ChEBI" id="CHEBI:71302"/>
        <dbReference type="ChEBI" id="CHEBI:71310"/>
        <dbReference type="EC" id="2.7.7.77"/>
    </reaction>
</comment>
<comment type="cofactor">
    <cofactor evidence="1">
        <name>Mg(2+)</name>
        <dbReference type="ChEBI" id="CHEBI:18420"/>
    </cofactor>
</comment>
<comment type="subcellular location">
    <subcellularLocation>
        <location evidence="1">Cytoplasm</location>
    </subcellularLocation>
</comment>
<comment type="domain">
    <text evidence="1">The N-terminal domain determines nucleotide recognition and specific binding, while the C-terminal domain determines the specific binding to the target protein.</text>
</comment>
<comment type="similarity">
    <text evidence="1">Belongs to the MobA family.</text>
</comment>
<gene>
    <name evidence="1" type="primary">mobA</name>
    <name type="ordered locus">BQ2027_MB2480C</name>
</gene>
<feature type="chain" id="PRO_0000134895" description="Probable molybdenum cofactor guanylyltransferase">
    <location>
        <begin position="1"/>
        <end position="201"/>
    </location>
</feature>
<feature type="binding site" evidence="1">
    <location>
        <begin position="16"/>
        <end position="18"/>
    </location>
    <ligand>
        <name>GTP</name>
        <dbReference type="ChEBI" id="CHEBI:37565"/>
    </ligand>
</feature>
<feature type="binding site" evidence="1">
    <location>
        <position position="28"/>
    </location>
    <ligand>
        <name>GTP</name>
        <dbReference type="ChEBI" id="CHEBI:37565"/>
    </ligand>
</feature>
<feature type="binding site" evidence="1">
    <location>
        <position position="75"/>
    </location>
    <ligand>
        <name>GTP</name>
        <dbReference type="ChEBI" id="CHEBI:37565"/>
    </ligand>
</feature>
<feature type="binding site" evidence="1">
    <location>
        <position position="107"/>
    </location>
    <ligand>
        <name>GTP</name>
        <dbReference type="ChEBI" id="CHEBI:37565"/>
    </ligand>
</feature>
<feature type="binding site" evidence="1">
    <location>
        <position position="107"/>
    </location>
    <ligand>
        <name>Mg(2+)</name>
        <dbReference type="ChEBI" id="CHEBI:18420"/>
    </ligand>
</feature>
<accession>P65403</accession>
<accession>A0A1R3Y219</accession>
<accession>O53180</accession>
<accession>X2BLF3</accession>
<sequence>MAELAPDTVPLAGVVLAGGESRRMGRDKATLPLPGGTTTLVEHMVGILGQRCAPVFVMAAPGQPLPTLPVPVLRDELPGLGPLPATGRGLRAAAEAGVRLAFVCAVDMPYLTVELIEDLARRAVQTDAEVVLPWDGRNHYLAAVYRTDLADRVDTLVGAGERKMSALVDASDALRIVMADSRPLTNVNSAAGLHAPMQPGR</sequence>
<evidence type="ECO:0000255" key="1">
    <source>
        <dbReference type="HAMAP-Rule" id="MF_00316"/>
    </source>
</evidence>
<reference key="1">
    <citation type="journal article" date="2003" name="Proc. Natl. Acad. Sci. U.S.A.">
        <title>The complete genome sequence of Mycobacterium bovis.</title>
        <authorList>
            <person name="Garnier T."/>
            <person name="Eiglmeier K."/>
            <person name="Camus J.-C."/>
            <person name="Medina N."/>
            <person name="Mansoor H."/>
            <person name="Pryor M."/>
            <person name="Duthoy S."/>
            <person name="Grondin S."/>
            <person name="Lacroix C."/>
            <person name="Monsempe C."/>
            <person name="Simon S."/>
            <person name="Harris B."/>
            <person name="Atkin R."/>
            <person name="Doggett J."/>
            <person name="Mayes R."/>
            <person name="Keating L."/>
            <person name="Wheeler P.R."/>
            <person name="Parkhill J."/>
            <person name="Barrell B.G."/>
            <person name="Cole S.T."/>
            <person name="Gordon S.V."/>
            <person name="Hewinson R.G."/>
        </authorList>
    </citation>
    <scope>NUCLEOTIDE SEQUENCE [LARGE SCALE GENOMIC DNA]</scope>
    <source>
        <strain>ATCC BAA-935 / AF2122/97</strain>
    </source>
</reference>
<reference key="2">
    <citation type="journal article" date="2017" name="Genome Announc.">
        <title>Updated reference genome sequence and annotation of Mycobacterium bovis AF2122/97.</title>
        <authorList>
            <person name="Malone K.M."/>
            <person name="Farrell D."/>
            <person name="Stuber T.P."/>
            <person name="Schubert O.T."/>
            <person name="Aebersold R."/>
            <person name="Robbe-Austerman S."/>
            <person name="Gordon S.V."/>
        </authorList>
    </citation>
    <scope>NUCLEOTIDE SEQUENCE [LARGE SCALE GENOMIC DNA]</scope>
    <scope>GENOME REANNOTATION</scope>
    <source>
        <strain>ATCC BAA-935 / AF2122/97</strain>
    </source>
</reference>
<dbReference type="EC" id="2.7.7.77" evidence="1"/>
<dbReference type="EMBL" id="LT708304">
    <property type="protein sequence ID" value="SIU01095.1"/>
    <property type="molecule type" value="Genomic_DNA"/>
</dbReference>
<dbReference type="RefSeq" id="NP_856127.1">
    <property type="nucleotide sequence ID" value="NC_002945.3"/>
</dbReference>
<dbReference type="RefSeq" id="WP_003412618.1">
    <property type="nucleotide sequence ID" value="NC_002945.4"/>
</dbReference>
<dbReference type="SMR" id="P65403"/>
<dbReference type="GeneID" id="45426443"/>
<dbReference type="KEGG" id="mbo:BQ2027_MB2480C"/>
<dbReference type="PATRIC" id="fig|233413.5.peg.2730"/>
<dbReference type="Proteomes" id="UP000001419">
    <property type="component" value="Chromosome"/>
</dbReference>
<dbReference type="GO" id="GO:0005737">
    <property type="term" value="C:cytoplasm"/>
    <property type="evidence" value="ECO:0007669"/>
    <property type="project" value="UniProtKB-SubCell"/>
</dbReference>
<dbReference type="GO" id="GO:0005525">
    <property type="term" value="F:GTP binding"/>
    <property type="evidence" value="ECO:0007669"/>
    <property type="project" value="UniProtKB-UniRule"/>
</dbReference>
<dbReference type="GO" id="GO:0046872">
    <property type="term" value="F:metal ion binding"/>
    <property type="evidence" value="ECO:0007669"/>
    <property type="project" value="UniProtKB-KW"/>
</dbReference>
<dbReference type="GO" id="GO:0061603">
    <property type="term" value="F:molybdenum cofactor guanylyltransferase activity"/>
    <property type="evidence" value="ECO:0007669"/>
    <property type="project" value="UniProtKB-EC"/>
</dbReference>
<dbReference type="GO" id="GO:0006777">
    <property type="term" value="P:Mo-molybdopterin cofactor biosynthetic process"/>
    <property type="evidence" value="ECO:0007669"/>
    <property type="project" value="UniProtKB-KW"/>
</dbReference>
<dbReference type="CDD" id="cd02503">
    <property type="entry name" value="MobA"/>
    <property type="match status" value="1"/>
</dbReference>
<dbReference type="Gene3D" id="3.90.550.10">
    <property type="entry name" value="Spore Coat Polysaccharide Biosynthesis Protein SpsA, Chain A"/>
    <property type="match status" value="1"/>
</dbReference>
<dbReference type="HAMAP" id="MF_00316">
    <property type="entry name" value="MobA"/>
    <property type="match status" value="1"/>
</dbReference>
<dbReference type="InterPro" id="IPR025877">
    <property type="entry name" value="MobA-like_NTP_Trfase"/>
</dbReference>
<dbReference type="InterPro" id="IPR013482">
    <property type="entry name" value="Molybde_CF_guanTrfase"/>
</dbReference>
<dbReference type="InterPro" id="IPR029044">
    <property type="entry name" value="Nucleotide-diphossugar_trans"/>
</dbReference>
<dbReference type="NCBIfam" id="NF001855">
    <property type="entry name" value="PRK00576.1"/>
    <property type="match status" value="1"/>
</dbReference>
<dbReference type="PANTHER" id="PTHR19136">
    <property type="entry name" value="MOLYBDENUM COFACTOR GUANYLYLTRANSFERASE"/>
    <property type="match status" value="1"/>
</dbReference>
<dbReference type="PANTHER" id="PTHR19136:SF81">
    <property type="entry name" value="MOLYBDENUM COFACTOR GUANYLYLTRANSFERASE"/>
    <property type="match status" value="1"/>
</dbReference>
<dbReference type="Pfam" id="PF12804">
    <property type="entry name" value="NTP_transf_3"/>
    <property type="match status" value="1"/>
</dbReference>
<dbReference type="SUPFAM" id="SSF53448">
    <property type="entry name" value="Nucleotide-diphospho-sugar transferases"/>
    <property type="match status" value="1"/>
</dbReference>
<protein>
    <recommendedName>
        <fullName evidence="1">Probable molybdenum cofactor guanylyltransferase</fullName>
        <shortName evidence="1">MoCo guanylyltransferase</shortName>
        <ecNumber evidence="1">2.7.7.77</ecNumber>
    </recommendedName>
    <alternativeName>
        <fullName evidence="1">GTP:molybdopterin guanylyltransferase</fullName>
    </alternativeName>
    <alternativeName>
        <fullName evidence="1">Mo-MPT guanylyltransferase</fullName>
    </alternativeName>
    <alternativeName>
        <fullName evidence="1">Molybdopterin guanylyltransferase</fullName>
    </alternativeName>
    <alternativeName>
        <fullName evidence="1">Molybdopterin-guanine dinucleotide synthase</fullName>
        <shortName evidence="1">MGD synthase</shortName>
    </alternativeName>
</protein>